<sequence length="478" mass="50238">MAGAAAASAAAAAVASGISARPVAPRPSPSRARAPRSVVRAAISVEKGEKAYTVEKSEEIFNAAKELMPGGVNSPVRAFKSVGGQPIVFDSVKGSRMWDVDGNEYIDYVGSWGPAIIGHADDTVNAALIETLKKGTSFGAPCVLENVLAEMVISAVPSIEMVRFVNSGTEACMGALRLVRAFTGREKILKFEGCYHGHADSFLVKAGSGVATLGLPDSPGVPKGATSETLTAPYNDVEAVKKLFEENKGQIAAVFLEPVVGNAGFIPPQPGFLNALRDLTKQDGALLVFDEVMTGFRLAYGGAQEYFGITPDVSTLGKIIGGGLPVGAYGGRKDIMEMVAPAGPMYQAGTLSGNPLAMTAGIHTLKRLMEPGTYDYLDKITGDLVRGVLDAGAKTGHEMCGGHIRGMFGFFFTAGPVHNFGDAKKSDTAKFGRFYRGMLEEGVYLAPSQFEAGFTSLAHTSQDIEKTVEAAAKVLRRI</sequence>
<organism>
    <name type="scientific">Oryza sativa subsp. japonica</name>
    <name type="common">Rice</name>
    <dbReference type="NCBI Taxonomy" id="39947"/>
    <lineage>
        <taxon>Eukaryota</taxon>
        <taxon>Viridiplantae</taxon>
        <taxon>Streptophyta</taxon>
        <taxon>Embryophyta</taxon>
        <taxon>Tracheophyta</taxon>
        <taxon>Spermatophyta</taxon>
        <taxon>Magnoliopsida</taxon>
        <taxon>Liliopsida</taxon>
        <taxon>Poales</taxon>
        <taxon>Poaceae</taxon>
        <taxon>BOP clade</taxon>
        <taxon>Oryzoideae</taxon>
        <taxon>Oryzeae</taxon>
        <taxon>Oryzinae</taxon>
        <taxon>Oryza</taxon>
        <taxon>Oryza sativa</taxon>
    </lineage>
</organism>
<protein>
    <recommendedName>
        <fullName>Glutamate-1-semialdehyde 2,1-aminomutase, chloroplastic</fullName>
        <shortName>GSA</shortName>
        <ecNumber>5.4.3.8</ecNumber>
    </recommendedName>
    <alternativeName>
        <fullName>Glutamate-1-semialdehyde aminotransferase</fullName>
        <shortName>GSA-AT</shortName>
    </alternativeName>
</protein>
<keyword id="KW-0149">Chlorophyll biosynthesis</keyword>
<keyword id="KW-0150">Chloroplast</keyword>
<keyword id="KW-0413">Isomerase</keyword>
<keyword id="KW-0934">Plastid</keyword>
<keyword id="KW-0627">Porphyrin biosynthesis</keyword>
<keyword id="KW-0663">Pyridoxal phosphate</keyword>
<keyword id="KW-1185">Reference proteome</keyword>
<keyword id="KW-0809">Transit peptide</keyword>
<dbReference type="EC" id="5.4.3.8"/>
<dbReference type="EMBL" id="AP005529">
    <property type="protein sequence ID" value="BAD11647.1"/>
    <property type="molecule type" value="Genomic_DNA"/>
</dbReference>
<dbReference type="EMBL" id="AP008214">
    <property type="protein sequence ID" value="BAF24251.1"/>
    <property type="molecule type" value="Genomic_DNA"/>
</dbReference>
<dbReference type="EMBL" id="AP014964">
    <property type="protein sequence ID" value="BAT06404.1"/>
    <property type="molecule type" value="Genomic_DNA"/>
</dbReference>
<dbReference type="EMBL" id="CM000145">
    <property type="protein sequence ID" value="EAZ43454.1"/>
    <property type="molecule type" value="Genomic_DNA"/>
</dbReference>
<dbReference type="EMBL" id="AK064826">
    <property type="protein sequence ID" value="BAG89226.1"/>
    <property type="molecule type" value="mRNA"/>
</dbReference>
<dbReference type="EMBL" id="AK104694">
    <property type="protein sequence ID" value="BAG96887.1"/>
    <property type="molecule type" value="mRNA"/>
</dbReference>
<dbReference type="RefSeq" id="XP_015650872.1">
    <property type="nucleotide sequence ID" value="XM_015795386.1"/>
</dbReference>
<dbReference type="SMR" id="Q6YZE2"/>
<dbReference type="FunCoup" id="Q6YZE2">
    <property type="interactions" value="921"/>
</dbReference>
<dbReference type="STRING" id="39947.Q6YZE2"/>
<dbReference type="PaxDb" id="39947-Q6YZE2"/>
<dbReference type="EnsemblPlants" id="Os08t0532200-01">
    <property type="protein sequence ID" value="Os08t0532200-01"/>
    <property type="gene ID" value="Os08g0532200"/>
</dbReference>
<dbReference type="EnsemblPlants" id="Os08t0532200-03">
    <property type="protein sequence ID" value="Os08t0532200-03"/>
    <property type="gene ID" value="Os08g0532200"/>
</dbReference>
<dbReference type="Gramene" id="Os08t0532200-01">
    <property type="protein sequence ID" value="Os08t0532200-01"/>
    <property type="gene ID" value="Os08g0532200"/>
</dbReference>
<dbReference type="Gramene" id="Os08t0532200-03">
    <property type="protein sequence ID" value="Os08t0532200-03"/>
    <property type="gene ID" value="Os08g0532200"/>
</dbReference>
<dbReference type="KEGG" id="dosa:Os08g0532200"/>
<dbReference type="eggNOG" id="KOG1401">
    <property type="taxonomic scope" value="Eukaryota"/>
</dbReference>
<dbReference type="HOGENOM" id="CLU_016922_1_5_1"/>
<dbReference type="InParanoid" id="Q6YZE2"/>
<dbReference type="OMA" id="WGPLIFG"/>
<dbReference type="OrthoDB" id="425114at2759"/>
<dbReference type="PlantReactome" id="R-OSA-4827054">
    <property type="pathway name" value="Tetrapyrrole biosynthesis I"/>
</dbReference>
<dbReference type="UniPathway" id="UPA00251">
    <property type="reaction ID" value="UER00317"/>
</dbReference>
<dbReference type="UniPathway" id="UPA00668"/>
<dbReference type="Proteomes" id="UP000000763">
    <property type="component" value="Chromosome 8"/>
</dbReference>
<dbReference type="Proteomes" id="UP000007752">
    <property type="component" value="Chromosome 8"/>
</dbReference>
<dbReference type="Proteomes" id="UP000059680">
    <property type="component" value="Chromosome 8"/>
</dbReference>
<dbReference type="ExpressionAtlas" id="Q6YZE2">
    <property type="expression patterns" value="baseline and differential"/>
</dbReference>
<dbReference type="GO" id="GO:0009507">
    <property type="term" value="C:chloroplast"/>
    <property type="evidence" value="ECO:0000318"/>
    <property type="project" value="GO_Central"/>
</dbReference>
<dbReference type="GO" id="GO:0042286">
    <property type="term" value="F:glutamate-1-semialdehyde 2,1-aminomutase activity"/>
    <property type="evidence" value="ECO:0007669"/>
    <property type="project" value="UniProtKB-EC"/>
</dbReference>
<dbReference type="GO" id="GO:0030170">
    <property type="term" value="F:pyridoxal phosphate binding"/>
    <property type="evidence" value="ECO:0007669"/>
    <property type="project" value="InterPro"/>
</dbReference>
<dbReference type="GO" id="GO:0008483">
    <property type="term" value="F:transaminase activity"/>
    <property type="evidence" value="ECO:0007669"/>
    <property type="project" value="InterPro"/>
</dbReference>
<dbReference type="GO" id="GO:0015995">
    <property type="term" value="P:chlorophyll biosynthetic process"/>
    <property type="evidence" value="ECO:0007669"/>
    <property type="project" value="UniProtKB-UniPathway"/>
</dbReference>
<dbReference type="GO" id="GO:0006782">
    <property type="term" value="P:protoporphyrinogen IX biosynthetic process"/>
    <property type="evidence" value="ECO:0007669"/>
    <property type="project" value="UniProtKB-UniPathway"/>
</dbReference>
<dbReference type="CDD" id="cd00610">
    <property type="entry name" value="OAT_like"/>
    <property type="match status" value="1"/>
</dbReference>
<dbReference type="FunFam" id="3.40.640.10:FF:000021">
    <property type="entry name" value="Glutamate-1-semialdehyde 2,1-aminomutase"/>
    <property type="match status" value="1"/>
</dbReference>
<dbReference type="FunFam" id="3.90.1150.10:FF:000012">
    <property type="entry name" value="Glutamate-1-semialdehyde 2,1-aminomutase"/>
    <property type="match status" value="1"/>
</dbReference>
<dbReference type="Gene3D" id="3.90.1150.10">
    <property type="entry name" value="Aspartate Aminotransferase, domain 1"/>
    <property type="match status" value="1"/>
</dbReference>
<dbReference type="Gene3D" id="3.40.640.10">
    <property type="entry name" value="Type I PLP-dependent aspartate aminotransferase-like (Major domain)"/>
    <property type="match status" value="1"/>
</dbReference>
<dbReference type="HAMAP" id="MF_00375">
    <property type="entry name" value="HemL_aminotrans_3"/>
    <property type="match status" value="1"/>
</dbReference>
<dbReference type="InterPro" id="IPR004639">
    <property type="entry name" value="4pyrrol_synth_GluAld_NH2Trfase"/>
</dbReference>
<dbReference type="InterPro" id="IPR005814">
    <property type="entry name" value="Aminotrans_3"/>
</dbReference>
<dbReference type="InterPro" id="IPR049704">
    <property type="entry name" value="Aminotrans_3_PPA_site"/>
</dbReference>
<dbReference type="InterPro" id="IPR015424">
    <property type="entry name" value="PyrdxlP-dep_Trfase"/>
</dbReference>
<dbReference type="InterPro" id="IPR015421">
    <property type="entry name" value="PyrdxlP-dep_Trfase_major"/>
</dbReference>
<dbReference type="InterPro" id="IPR015422">
    <property type="entry name" value="PyrdxlP-dep_Trfase_small"/>
</dbReference>
<dbReference type="NCBIfam" id="TIGR00713">
    <property type="entry name" value="hemL"/>
    <property type="match status" value="1"/>
</dbReference>
<dbReference type="NCBIfam" id="NF000818">
    <property type="entry name" value="PRK00062.1"/>
    <property type="match status" value="1"/>
</dbReference>
<dbReference type="PANTHER" id="PTHR43713">
    <property type="entry name" value="GLUTAMATE-1-SEMIALDEHYDE 2,1-AMINOMUTASE"/>
    <property type="match status" value="1"/>
</dbReference>
<dbReference type="PANTHER" id="PTHR43713:SF3">
    <property type="entry name" value="GLUTAMATE-1-SEMIALDEHYDE 2,1-AMINOMUTASE 1, CHLOROPLASTIC-RELATED"/>
    <property type="match status" value="1"/>
</dbReference>
<dbReference type="Pfam" id="PF00202">
    <property type="entry name" value="Aminotran_3"/>
    <property type="match status" value="1"/>
</dbReference>
<dbReference type="SUPFAM" id="SSF53383">
    <property type="entry name" value="PLP-dependent transferases"/>
    <property type="match status" value="1"/>
</dbReference>
<dbReference type="PROSITE" id="PS00600">
    <property type="entry name" value="AA_TRANSFER_CLASS_3"/>
    <property type="match status" value="1"/>
</dbReference>
<name>GSA_ORYSJ</name>
<gene>
    <name type="primary">GSA</name>
    <name type="ordered locus">Os08g0532200</name>
    <name type="ordered locus">LOC_Os08g41990</name>
    <name evidence="5" type="ORF">OsJ_28060</name>
    <name type="ORF">P0702E04.16</name>
</gene>
<reference key="1">
    <citation type="journal article" date="2005" name="Nature">
        <title>The map-based sequence of the rice genome.</title>
        <authorList>
            <consortium name="International rice genome sequencing project (IRGSP)"/>
        </authorList>
    </citation>
    <scope>NUCLEOTIDE SEQUENCE [LARGE SCALE GENOMIC DNA]</scope>
    <source>
        <strain>cv. Nipponbare</strain>
    </source>
</reference>
<reference key="2">
    <citation type="journal article" date="2008" name="Nucleic Acids Res.">
        <title>The rice annotation project database (RAP-DB): 2008 update.</title>
        <authorList>
            <consortium name="The rice annotation project (RAP)"/>
        </authorList>
    </citation>
    <scope>GENOME REANNOTATION</scope>
    <source>
        <strain>cv. Nipponbare</strain>
    </source>
</reference>
<reference key="3">
    <citation type="journal article" date="2013" name="Rice">
        <title>Improvement of the Oryza sativa Nipponbare reference genome using next generation sequence and optical map data.</title>
        <authorList>
            <person name="Kawahara Y."/>
            <person name="de la Bastide M."/>
            <person name="Hamilton J.P."/>
            <person name="Kanamori H."/>
            <person name="McCombie W.R."/>
            <person name="Ouyang S."/>
            <person name="Schwartz D.C."/>
            <person name="Tanaka T."/>
            <person name="Wu J."/>
            <person name="Zhou S."/>
            <person name="Childs K.L."/>
            <person name="Davidson R.M."/>
            <person name="Lin H."/>
            <person name="Quesada-Ocampo L."/>
            <person name="Vaillancourt B."/>
            <person name="Sakai H."/>
            <person name="Lee S.S."/>
            <person name="Kim J."/>
            <person name="Numa H."/>
            <person name="Itoh T."/>
            <person name="Buell C.R."/>
            <person name="Matsumoto T."/>
        </authorList>
    </citation>
    <scope>GENOME REANNOTATION</scope>
    <source>
        <strain>cv. Nipponbare</strain>
    </source>
</reference>
<reference key="4">
    <citation type="journal article" date="2005" name="PLoS Biol.">
        <title>The genomes of Oryza sativa: a history of duplications.</title>
        <authorList>
            <person name="Yu J."/>
            <person name="Wang J."/>
            <person name="Lin W."/>
            <person name="Li S."/>
            <person name="Li H."/>
            <person name="Zhou J."/>
            <person name="Ni P."/>
            <person name="Dong W."/>
            <person name="Hu S."/>
            <person name="Zeng C."/>
            <person name="Zhang J."/>
            <person name="Zhang Y."/>
            <person name="Li R."/>
            <person name="Xu Z."/>
            <person name="Li S."/>
            <person name="Li X."/>
            <person name="Zheng H."/>
            <person name="Cong L."/>
            <person name="Lin L."/>
            <person name="Yin J."/>
            <person name="Geng J."/>
            <person name="Li G."/>
            <person name="Shi J."/>
            <person name="Liu J."/>
            <person name="Lv H."/>
            <person name="Li J."/>
            <person name="Wang J."/>
            <person name="Deng Y."/>
            <person name="Ran L."/>
            <person name="Shi X."/>
            <person name="Wang X."/>
            <person name="Wu Q."/>
            <person name="Li C."/>
            <person name="Ren X."/>
            <person name="Wang J."/>
            <person name="Wang X."/>
            <person name="Li D."/>
            <person name="Liu D."/>
            <person name="Zhang X."/>
            <person name="Ji Z."/>
            <person name="Zhao W."/>
            <person name="Sun Y."/>
            <person name="Zhang Z."/>
            <person name="Bao J."/>
            <person name="Han Y."/>
            <person name="Dong L."/>
            <person name="Ji J."/>
            <person name="Chen P."/>
            <person name="Wu S."/>
            <person name="Liu J."/>
            <person name="Xiao Y."/>
            <person name="Bu D."/>
            <person name="Tan J."/>
            <person name="Yang L."/>
            <person name="Ye C."/>
            <person name="Zhang J."/>
            <person name="Xu J."/>
            <person name="Zhou Y."/>
            <person name="Yu Y."/>
            <person name="Zhang B."/>
            <person name="Zhuang S."/>
            <person name="Wei H."/>
            <person name="Liu B."/>
            <person name="Lei M."/>
            <person name="Yu H."/>
            <person name="Li Y."/>
            <person name="Xu H."/>
            <person name="Wei S."/>
            <person name="He X."/>
            <person name="Fang L."/>
            <person name="Zhang Z."/>
            <person name="Zhang Y."/>
            <person name="Huang X."/>
            <person name="Su Z."/>
            <person name="Tong W."/>
            <person name="Li J."/>
            <person name="Tong Z."/>
            <person name="Li S."/>
            <person name="Ye J."/>
            <person name="Wang L."/>
            <person name="Fang L."/>
            <person name="Lei T."/>
            <person name="Chen C.-S."/>
            <person name="Chen H.-C."/>
            <person name="Xu Z."/>
            <person name="Li H."/>
            <person name="Huang H."/>
            <person name="Zhang F."/>
            <person name="Xu H."/>
            <person name="Li N."/>
            <person name="Zhao C."/>
            <person name="Li S."/>
            <person name="Dong L."/>
            <person name="Huang Y."/>
            <person name="Li L."/>
            <person name="Xi Y."/>
            <person name="Qi Q."/>
            <person name="Li W."/>
            <person name="Zhang B."/>
            <person name="Hu W."/>
            <person name="Zhang Y."/>
            <person name="Tian X."/>
            <person name="Jiao Y."/>
            <person name="Liang X."/>
            <person name="Jin J."/>
            <person name="Gao L."/>
            <person name="Zheng W."/>
            <person name="Hao B."/>
            <person name="Liu S.-M."/>
            <person name="Wang W."/>
            <person name="Yuan L."/>
            <person name="Cao M."/>
            <person name="McDermott J."/>
            <person name="Samudrala R."/>
            <person name="Wang J."/>
            <person name="Wong G.K.-S."/>
            <person name="Yang H."/>
        </authorList>
    </citation>
    <scope>NUCLEOTIDE SEQUENCE [LARGE SCALE GENOMIC DNA]</scope>
    <source>
        <strain>cv. Nipponbare</strain>
    </source>
</reference>
<reference key="5">
    <citation type="journal article" date="2003" name="Science">
        <title>Collection, mapping, and annotation of over 28,000 cDNA clones from japonica rice.</title>
        <authorList>
            <consortium name="The rice full-length cDNA consortium"/>
        </authorList>
    </citation>
    <scope>NUCLEOTIDE SEQUENCE [LARGE SCALE MRNA]</scope>
    <source>
        <strain>cv. Nipponbare</strain>
    </source>
</reference>
<accession>Q6YZE2</accession>
<accession>Q0J464</accession>
<comment type="catalytic activity">
    <reaction>
        <text>(S)-4-amino-5-oxopentanoate = 5-aminolevulinate</text>
        <dbReference type="Rhea" id="RHEA:14265"/>
        <dbReference type="ChEBI" id="CHEBI:57501"/>
        <dbReference type="ChEBI" id="CHEBI:356416"/>
        <dbReference type="EC" id="5.4.3.8"/>
    </reaction>
</comment>
<comment type="cofactor">
    <cofactor evidence="1">
        <name>pyridoxal 5'-phosphate</name>
        <dbReference type="ChEBI" id="CHEBI:597326"/>
    </cofactor>
</comment>
<comment type="pathway">
    <text>Porphyrin-containing compound metabolism; protoporphyrin-IX biosynthesis; 5-aminolevulinate from L-glutamyl-tRNA(Glu): step 2/2.</text>
</comment>
<comment type="pathway">
    <text>Porphyrin-containing compound metabolism; chlorophyll biosynthesis.</text>
</comment>
<comment type="subunit">
    <text evidence="1">Homodimer.</text>
</comment>
<comment type="subcellular location">
    <subcellularLocation>
        <location evidence="4">Plastid</location>
        <location evidence="4">Chloroplast</location>
    </subcellularLocation>
</comment>
<comment type="similarity">
    <text evidence="4">Belongs to the class-III pyridoxal-phosphate-dependent aminotransferase family. HemL subfamily.</text>
</comment>
<feature type="transit peptide" description="Chloroplast" evidence="2">
    <location>
        <begin position="1"/>
        <end position="40"/>
    </location>
</feature>
<feature type="chain" id="PRO_0000247473" description="Glutamate-1-semialdehyde 2,1-aminomutase, chloroplastic">
    <location>
        <begin position="41"/>
        <end position="478"/>
    </location>
</feature>
<feature type="region of interest" description="Disordered" evidence="3">
    <location>
        <begin position="15"/>
        <end position="36"/>
    </location>
</feature>
<feature type="modified residue" description="N6-(pyridoxal phosphate)lysine" evidence="1">
    <location>
        <position position="318"/>
    </location>
</feature>
<proteinExistence type="evidence at transcript level"/>
<evidence type="ECO:0000250" key="1"/>
<evidence type="ECO:0000255" key="2"/>
<evidence type="ECO:0000256" key="3">
    <source>
        <dbReference type="SAM" id="MobiDB-lite"/>
    </source>
</evidence>
<evidence type="ECO:0000305" key="4"/>
<evidence type="ECO:0000312" key="5">
    <source>
        <dbReference type="EMBL" id="EAZ43454.1"/>
    </source>
</evidence>